<organism>
    <name type="scientific">Escherichia coli O127:H6 (strain E2348/69 / EPEC)</name>
    <dbReference type="NCBI Taxonomy" id="574521"/>
    <lineage>
        <taxon>Bacteria</taxon>
        <taxon>Pseudomonadati</taxon>
        <taxon>Pseudomonadota</taxon>
        <taxon>Gammaproteobacteria</taxon>
        <taxon>Enterobacterales</taxon>
        <taxon>Enterobacteriaceae</taxon>
        <taxon>Escherichia</taxon>
    </lineage>
</organism>
<accession>B7UNT3</accession>
<feature type="chain" id="PRO_1000163953" description="Acetylornithine deacetylase">
    <location>
        <begin position="1"/>
        <end position="383"/>
    </location>
</feature>
<feature type="active site" evidence="1">
    <location>
        <position position="82"/>
    </location>
</feature>
<feature type="active site" evidence="1">
    <location>
        <position position="144"/>
    </location>
</feature>
<feature type="binding site" evidence="1">
    <location>
        <position position="80"/>
    </location>
    <ligand>
        <name>Zn(2+)</name>
        <dbReference type="ChEBI" id="CHEBI:29105"/>
        <label>1</label>
    </ligand>
</feature>
<feature type="binding site" evidence="1">
    <location>
        <position position="112"/>
    </location>
    <ligand>
        <name>Zn(2+)</name>
        <dbReference type="ChEBI" id="CHEBI:29105"/>
        <label>1</label>
    </ligand>
</feature>
<feature type="binding site" evidence="1">
    <location>
        <position position="112"/>
    </location>
    <ligand>
        <name>Zn(2+)</name>
        <dbReference type="ChEBI" id="CHEBI:29105"/>
        <label>2</label>
    </ligand>
</feature>
<feature type="binding site" evidence="1">
    <location>
        <position position="145"/>
    </location>
    <ligand>
        <name>Zn(2+)</name>
        <dbReference type="ChEBI" id="CHEBI:29105"/>
        <label>2</label>
    </ligand>
</feature>
<feature type="binding site" evidence="1">
    <location>
        <position position="169"/>
    </location>
    <ligand>
        <name>Zn(2+)</name>
        <dbReference type="ChEBI" id="CHEBI:29105"/>
        <label>1</label>
    </ligand>
</feature>
<feature type="binding site" evidence="1">
    <location>
        <position position="355"/>
    </location>
    <ligand>
        <name>Zn(2+)</name>
        <dbReference type="ChEBI" id="CHEBI:29105"/>
        <label>2</label>
    </ligand>
</feature>
<reference key="1">
    <citation type="journal article" date="2009" name="J. Bacteriol.">
        <title>Complete genome sequence and comparative genome analysis of enteropathogenic Escherichia coli O127:H6 strain E2348/69.</title>
        <authorList>
            <person name="Iguchi A."/>
            <person name="Thomson N.R."/>
            <person name="Ogura Y."/>
            <person name="Saunders D."/>
            <person name="Ooka T."/>
            <person name="Henderson I.R."/>
            <person name="Harris D."/>
            <person name="Asadulghani M."/>
            <person name="Kurokawa K."/>
            <person name="Dean P."/>
            <person name="Kenny B."/>
            <person name="Quail M.A."/>
            <person name="Thurston S."/>
            <person name="Dougan G."/>
            <person name="Hayashi T."/>
            <person name="Parkhill J."/>
            <person name="Frankel G."/>
        </authorList>
    </citation>
    <scope>NUCLEOTIDE SEQUENCE [LARGE SCALE GENOMIC DNA]</scope>
    <source>
        <strain>E2348/69 / EPEC</strain>
    </source>
</reference>
<keyword id="KW-0028">Amino-acid biosynthesis</keyword>
<keyword id="KW-0055">Arginine biosynthesis</keyword>
<keyword id="KW-0170">Cobalt</keyword>
<keyword id="KW-0963">Cytoplasm</keyword>
<keyword id="KW-0378">Hydrolase</keyword>
<keyword id="KW-0479">Metal-binding</keyword>
<keyword id="KW-1185">Reference proteome</keyword>
<keyword id="KW-0862">Zinc</keyword>
<sequence>MKNKLPPFIEIYRALIATPSISATEEALDQSNADLITLLADWFKDLGFNVEVQPVPGTRNKFNMLASCGQGAGGLLLAGHTDTVPFDDGRWTRDPFTLTEHDGKLYGLGTADMKGFFAFILDALRDVDVTKLAKPLYILATADEETSMAGARYFAETTALRPDCAIIGEPTSLQPVRAHKGHISNAIRIQGQSGHSSDPARGVNAIELMHDAIGHILQLRDNLKERYHYDAFTVPYPTLNLGHIHGGDASNRICACCELHMDIRPLPGMTLNELNGLLNDALAPVSERWPGRLTVDELHPPIPGYECPPNHKLVEVVEKLLGAKTEVVNYCTEAPFIQTLCPTLVLGPGSINQAHQPDEYLETRFIKPTRELITQVIHHFCWH</sequence>
<evidence type="ECO:0000255" key="1">
    <source>
        <dbReference type="HAMAP-Rule" id="MF_01108"/>
    </source>
</evidence>
<protein>
    <recommendedName>
        <fullName evidence="1">Acetylornithine deacetylase</fullName>
        <shortName evidence="1">AO</shortName>
        <shortName evidence="1">Acetylornithinase</shortName>
        <ecNumber evidence="1">3.5.1.16</ecNumber>
    </recommendedName>
    <alternativeName>
        <fullName evidence="1">N-acetylornithinase</fullName>
        <shortName evidence="1">NAO</shortName>
    </alternativeName>
</protein>
<proteinExistence type="inferred from homology"/>
<dbReference type="EC" id="3.5.1.16" evidence="1"/>
<dbReference type="EMBL" id="FM180568">
    <property type="protein sequence ID" value="CAS11817.1"/>
    <property type="molecule type" value="Genomic_DNA"/>
</dbReference>
<dbReference type="RefSeq" id="WP_001314333.1">
    <property type="nucleotide sequence ID" value="NC_011601.1"/>
</dbReference>
<dbReference type="SMR" id="B7UNT3"/>
<dbReference type="MEROPS" id="M20.974"/>
<dbReference type="KEGG" id="ecg:E2348C_4269"/>
<dbReference type="HOGENOM" id="CLU_021802_2_4_6"/>
<dbReference type="UniPathway" id="UPA00068">
    <property type="reaction ID" value="UER00110"/>
</dbReference>
<dbReference type="Proteomes" id="UP000008205">
    <property type="component" value="Chromosome"/>
</dbReference>
<dbReference type="GO" id="GO:0005737">
    <property type="term" value="C:cytoplasm"/>
    <property type="evidence" value="ECO:0007669"/>
    <property type="project" value="UniProtKB-SubCell"/>
</dbReference>
<dbReference type="GO" id="GO:0008777">
    <property type="term" value="F:acetylornithine deacetylase activity"/>
    <property type="evidence" value="ECO:0007669"/>
    <property type="project" value="UniProtKB-UniRule"/>
</dbReference>
<dbReference type="GO" id="GO:0008270">
    <property type="term" value="F:zinc ion binding"/>
    <property type="evidence" value="ECO:0007669"/>
    <property type="project" value="UniProtKB-UniRule"/>
</dbReference>
<dbReference type="GO" id="GO:0006526">
    <property type="term" value="P:L-arginine biosynthetic process"/>
    <property type="evidence" value="ECO:0007669"/>
    <property type="project" value="UniProtKB-UniRule"/>
</dbReference>
<dbReference type="CDD" id="cd03894">
    <property type="entry name" value="M20_ArgE"/>
    <property type="match status" value="1"/>
</dbReference>
<dbReference type="FunFam" id="3.30.70.360:FF:000003">
    <property type="entry name" value="Acetylornithine deacetylase"/>
    <property type="match status" value="1"/>
</dbReference>
<dbReference type="Gene3D" id="3.30.70.360">
    <property type="match status" value="1"/>
</dbReference>
<dbReference type="Gene3D" id="3.40.630.10">
    <property type="entry name" value="Zn peptidases"/>
    <property type="match status" value="1"/>
</dbReference>
<dbReference type="HAMAP" id="MF_01108">
    <property type="entry name" value="ArgE"/>
    <property type="match status" value="1"/>
</dbReference>
<dbReference type="InterPro" id="IPR010169">
    <property type="entry name" value="AcOrn-deacetyl"/>
</dbReference>
<dbReference type="InterPro" id="IPR001261">
    <property type="entry name" value="ArgE/DapE_CS"/>
</dbReference>
<dbReference type="InterPro" id="IPR036264">
    <property type="entry name" value="Bact_exopeptidase_dim_dom"/>
</dbReference>
<dbReference type="InterPro" id="IPR002933">
    <property type="entry name" value="Peptidase_M20"/>
</dbReference>
<dbReference type="InterPro" id="IPR011650">
    <property type="entry name" value="Peptidase_M20_dimer"/>
</dbReference>
<dbReference type="InterPro" id="IPR050072">
    <property type="entry name" value="Peptidase_M20A"/>
</dbReference>
<dbReference type="NCBIfam" id="TIGR01892">
    <property type="entry name" value="AcOrn-deacetyl"/>
    <property type="match status" value="1"/>
</dbReference>
<dbReference type="NCBIfam" id="NF003474">
    <property type="entry name" value="PRK05111.1"/>
    <property type="match status" value="1"/>
</dbReference>
<dbReference type="PANTHER" id="PTHR43808">
    <property type="entry name" value="ACETYLORNITHINE DEACETYLASE"/>
    <property type="match status" value="1"/>
</dbReference>
<dbReference type="PANTHER" id="PTHR43808:SF1">
    <property type="entry name" value="ACETYLORNITHINE DEACETYLASE"/>
    <property type="match status" value="1"/>
</dbReference>
<dbReference type="Pfam" id="PF07687">
    <property type="entry name" value="M20_dimer"/>
    <property type="match status" value="1"/>
</dbReference>
<dbReference type="Pfam" id="PF01546">
    <property type="entry name" value="Peptidase_M20"/>
    <property type="match status" value="1"/>
</dbReference>
<dbReference type="SUPFAM" id="SSF55031">
    <property type="entry name" value="Bacterial exopeptidase dimerisation domain"/>
    <property type="match status" value="1"/>
</dbReference>
<dbReference type="SUPFAM" id="SSF53187">
    <property type="entry name" value="Zn-dependent exopeptidases"/>
    <property type="match status" value="1"/>
</dbReference>
<dbReference type="PROSITE" id="PS00758">
    <property type="entry name" value="ARGE_DAPE_CPG2_1"/>
    <property type="match status" value="1"/>
</dbReference>
<dbReference type="PROSITE" id="PS00759">
    <property type="entry name" value="ARGE_DAPE_CPG2_2"/>
    <property type="match status" value="1"/>
</dbReference>
<comment type="function">
    <text evidence="1">Catalyzes the hydrolysis of the amide bond of N(2)-acetylated L-amino acids. Cleaves the acetyl group from N-acetyl-L-ornithine to form L-ornithine, an intermediate in L-arginine biosynthesis pathway, and a branchpoint in the synthesis of polyamines.</text>
</comment>
<comment type="catalytic activity">
    <reaction evidence="1">
        <text>N(2)-acetyl-L-ornithine + H2O = L-ornithine + acetate</text>
        <dbReference type="Rhea" id="RHEA:15941"/>
        <dbReference type="ChEBI" id="CHEBI:15377"/>
        <dbReference type="ChEBI" id="CHEBI:30089"/>
        <dbReference type="ChEBI" id="CHEBI:46911"/>
        <dbReference type="ChEBI" id="CHEBI:57805"/>
        <dbReference type="EC" id="3.5.1.16"/>
    </reaction>
</comment>
<comment type="cofactor">
    <cofactor evidence="1">
        <name>Zn(2+)</name>
        <dbReference type="ChEBI" id="CHEBI:29105"/>
    </cofactor>
    <cofactor evidence="1">
        <name>Co(2+)</name>
        <dbReference type="ChEBI" id="CHEBI:48828"/>
    </cofactor>
    <text evidence="1">Binds 2 Zn(2+) or Co(2+) ions per subunit.</text>
</comment>
<comment type="cofactor">
    <cofactor evidence="1">
        <name>glutathione</name>
        <dbReference type="ChEBI" id="CHEBI:57925"/>
    </cofactor>
</comment>
<comment type="pathway">
    <text evidence="1">Amino-acid biosynthesis; L-arginine biosynthesis; L-ornithine from N(2)-acetyl-L-ornithine (linear): step 1/1.</text>
</comment>
<comment type="subunit">
    <text evidence="1">Homodimer.</text>
</comment>
<comment type="subcellular location">
    <subcellularLocation>
        <location evidence="1">Cytoplasm</location>
    </subcellularLocation>
</comment>
<comment type="similarity">
    <text evidence="1">Belongs to the peptidase M20A family. ArgE subfamily.</text>
</comment>
<gene>
    <name evidence="1" type="primary">argE</name>
    <name type="ordered locus">E2348C_4269</name>
</gene>
<name>ARGE_ECO27</name>